<dbReference type="EMBL" id="CP001581">
    <property type="protein sequence ID" value="ACO84705.1"/>
    <property type="molecule type" value="Genomic_DNA"/>
</dbReference>
<dbReference type="RefSeq" id="WP_012704373.1">
    <property type="nucleotide sequence ID" value="NC_012563.1"/>
</dbReference>
<dbReference type="PDB" id="6EKT">
    <property type="method" value="X-ray"/>
    <property type="resolution" value="1.75 A"/>
    <property type="chains" value="A=1-416"/>
</dbReference>
<dbReference type="PDBsum" id="6EKT"/>
<dbReference type="SMR" id="C1FUH7"/>
<dbReference type="KEGG" id="cby:CLM_0895"/>
<dbReference type="eggNOG" id="ENOG5033J7B">
    <property type="taxonomic scope" value="Bacteria"/>
</dbReference>
<dbReference type="HOGENOM" id="CLU_660045_0_0_9"/>
<dbReference type="Proteomes" id="UP000001374">
    <property type="component" value="Chromosome"/>
</dbReference>
<dbReference type="InterPro" id="IPR010567">
    <property type="entry name" value="Clostridium_P47"/>
</dbReference>
<dbReference type="Pfam" id="PF06597">
    <property type="entry name" value="Clostridium_P47"/>
    <property type="match status" value="1"/>
</dbReference>
<sequence>MNTYGWDIVYGCSKRVVNKHLKEYITKNNIQFLYSNIDKKQEIKMVFDNWEIINGGSSNFLRIKTPIKEGYFKVRNTTVDLSGINPVLEIKLDFFNDISNPNIKELKFNFGSESNDDIKIIVSDLNGNLQEEDEFYFNKLLINAFIQNEKQISYIFASLNVTSDIEWMNPKQFKFVYYSPTDNSDGYLFILSVVTNRDISKLSANVDGNILGNNSEVGLLISEKLFLQNMVLSRLSSNMGSNINKNNFEVISTSDTTGRIVNNSTLNWYGLKVAALYYYPKINNFSMQLFEGNKLKISLRGLVRLTGLEAVYSDFEIQSINKFVYNSTNKKAYFEVDKNPTSSYKYHLFPGDLISLAVLSSVTHWSIKSIEGALGFELINNFVDLINNTIKWNNLKISQVTNVTLNVGFCIQGNAN</sequence>
<proteinExistence type="evidence at protein level"/>
<comment type="function">
    <text evidence="5">Part of a botulinum neurotoxin type A2 (BoNT) locus; may be part of a progenitor toxin complex required to protect BoNT during its passage through the host gastrointestinal tract.</text>
</comment>
<comment type="subunit">
    <text evidence="2">Part of a crude toxin extract that includes BoNTA2/NTNH, P47, OrfX2 and OrfX3; OrfX1 was not detected.</text>
</comment>
<comment type="induction">
    <text evidence="1 2">The toxin locus has divergently transcribed operons maximally expressed during early stationary phase. This is part of the p47-ntnh-botA operon (PubMed:15158256). The crude toxin extract was isolated from cells that had been growing statically for 96 hours (at protein level) (PubMed:19915042).</text>
</comment>
<comment type="domain">
    <text evidence="3">An elongated protein with a middle beta-sheet wrapped around a long alpha-helix. Structurally similar to tubular lipid-binding (TULIP) superfamily proteins. The N-terminal domain (residues 35-175) folds very similarly to OrfX2 (residues 6-168), another protein of the same locus (PubMed:29067689). This structure is very similar to OrfX3 in the OrfX1-OrfX3 complex from P.bifermentans (AC A0A5P3XKL3, PDB:8BGM).</text>
</comment>
<comment type="similarity">
    <text evidence="5">Belongs to the TULIP P47 family.</text>
</comment>
<name>P47_CLOBJ</name>
<evidence type="ECO:0000269" key="1">
    <source>
    </source>
</evidence>
<evidence type="ECO:0000269" key="2">
    <source>
    </source>
</evidence>
<evidence type="ECO:0000269" key="3">
    <source>
    </source>
</evidence>
<evidence type="ECO:0000303" key="4">
    <source>
    </source>
</evidence>
<evidence type="ECO:0000305" key="5">
    <source>
    </source>
</evidence>
<evidence type="ECO:0000312" key="6">
    <source>
        <dbReference type="EMBL" id="ACO84705.1"/>
    </source>
</evidence>
<evidence type="ECO:0007744" key="7">
    <source>
        <dbReference type="PDB" id="6EKT"/>
    </source>
</evidence>
<evidence type="ECO:0007829" key="8">
    <source>
        <dbReference type="PDB" id="6EKT"/>
    </source>
</evidence>
<protein>
    <recommendedName>
        <fullName evidence="4">Protein P47</fullName>
    </recommendedName>
</protein>
<gene>
    <name evidence="6" type="primary">p47</name>
    <name evidence="6" type="ordered locus">CLM_0895</name>
</gene>
<reference evidence="6" key="1">
    <citation type="submission" date="2008-10" db="EMBL/GenBank/DDBJ databases">
        <title>Genome sequence of Clostridium botulinum A2 Kyoto.</title>
        <authorList>
            <person name="Shrivastava S."/>
            <person name="Brinkac L.M."/>
            <person name="Brown J.L."/>
            <person name="Bruce D."/>
            <person name="Detter C.C."/>
            <person name="Johnson E.A."/>
            <person name="Munk C.A."/>
            <person name="Smith L.A."/>
            <person name="Smith T.J."/>
            <person name="Sutton G."/>
            <person name="Brettin T.S."/>
        </authorList>
    </citation>
    <scope>NUCLEOTIDE SEQUENCE [LARGE SCALE GENOMIC DNA]</scope>
    <source>
        <strain>Kyoto / Type A2</strain>
    </source>
</reference>
<reference key="2">
    <citation type="journal article" date="2004" name="FEMS Microbiol. Lett.">
        <title>Nucleotide sequence and transcriptional analysis of the type A2 neurotoxin gene cluster in Clostridium botulinum.</title>
        <authorList>
            <person name="Dineen S.S."/>
            <person name="Bradshaw M."/>
            <person name="Karasek C.E."/>
            <person name="Johnson E.A."/>
        </authorList>
    </citation>
    <scope>INDUCTION</scope>
    <scope>OPERON STRUCTURE</scope>
    <source>
        <strain>Kyoto / Type A2</strain>
    </source>
</reference>
<reference key="3">
    <citation type="journal article" date="2010" name="Appl. Environ. Microbiol.">
        <title>Expression of the Clostridium botulinum A2 neurotoxin gene cluster proteins and characterization of the A2 complex.</title>
        <authorList>
            <person name="Lin G."/>
            <person name="Tepp W.H."/>
            <person name="Pier C.L."/>
            <person name="Jacobson M.J."/>
            <person name="Johnson E.A."/>
        </authorList>
    </citation>
    <scope>SUBUNIT</scope>
    <scope>INDUCTION</scope>
    <source>
        <strain>Kyoto / Type A2</strain>
    </source>
</reference>
<reference evidence="7" key="4">
    <citation type="journal article" date="2017" name="FEBS Lett.">
        <title>Crystal structures of OrfX2 and P47 from a Botulinum neurotoxin OrfX-type gene cluster.</title>
        <authorList>
            <person name="Gustafsson R."/>
            <person name="Berntsson R.P."/>
            <person name="Martinez-Carranza M."/>
            <person name="El Tekle G."/>
            <person name="Odegrip R."/>
            <person name="Johnson E.A."/>
            <person name="Stenmark P."/>
        </authorList>
    </citation>
    <scope>X-RAY CRYSTALLOGRAPHY (1.75 ANGSTROMS)</scope>
    <scope>POSSIBLE FUNCTION</scope>
    <scope>DOMAIN</scope>
</reference>
<feature type="chain" id="PRO_0000457883" description="Protein P47">
    <location>
        <begin position="1"/>
        <end position="416"/>
    </location>
</feature>
<feature type="strand" evidence="8">
    <location>
        <begin position="7"/>
        <end position="13"/>
    </location>
</feature>
<feature type="helix" evidence="8">
    <location>
        <begin position="14"/>
        <end position="28"/>
    </location>
</feature>
<feature type="strand" evidence="8">
    <location>
        <begin position="31"/>
        <end position="36"/>
    </location>
</feature>
<feature type="turn" evidence="8">
    <location>
        <begin position="37"/>
        <end position="40"/>
    </location>
</feature>
<feature type="strand" evidence="8">
    <location>
        <begin position="41"/>
        <end position="48"/>
    </location>
</feature>
<feature type="strand" evidence="8">
    <location>
        <begin position="51"/>
        <end position="53"/>
    </location>
</feature>
<feature type="strand" evidence="8">
    <location>
        <begin position="60"/>
        <end position="64"/>
    </location>
</feature>
<feature type="strand" evidence="8">
    <location>
        <begin position="67"/>
        <end position="73"/>
    </location>
</feature>
<feature type="strand" evidence="8">
    <location>
        <begin position="78"/>
        <end position="80"/>
    </location>
</feature>
<feature type="strand" evidence="8">
    <location>
        <begin position="87"/>
        <end position="97"/>
    </location>
</feature>
<feature type="strand" evidence="8">
    <location>
        <begin position="100"/>
        <end position="109"/>
    </location>
</feature>
<feature type="strand" evidence="8">
    <location>
        <begin position="117"/>
        <end position="123"/>
    </location>
</feature>
<feature type="helix" evidence="8">
    <location>
        <begin position="131"/>
        <end position="147"/>
    </location>
</feature>
<feature type="helix" evidence="8">
    <location>
        <begin position="149"/>
        <end position="151"/>
    </location>
</feature>
<feature type="strand" evidence="8">
    <location>
        <begin position="156"/>
        <end position="162"/>
    </location>
</feature>
<feature type="helix" evidence="8">
    <location>
        <begin position="166"/>
        <end position="168"/>
    </location>
</feature>
<feature type="strand" evidence="8">
    <location>
        <begin position="171"/>
        <end position="178"/>
    </location>
</feature>
<feature type="strand" evidence="8">
    <location>
        <begin position="187"/>
        <end position="195"/>
    </location>
</feature>
<feature type="helix" evidence="8">
    <location>
        <begin position="208"/>
        <end position="211"/>
    </location>
</feature>
<feature type="strand" evidence="8">
    <location>
        <begin position="216"/>
        <end position="221"/>
    </location>
</feature>
<feature type="helix" evidence="8">
    <location>
        <begin position="223"/>
        <end position="229"/>
    </location>
</feature>
<feature type="turn" evidence="8">
    <location>
        <begin position="230"/>
        <end position="238"/>
    </location>
</feature>
<feature type="helix" evidence="8">
    <location>
        <begin position="245"/>
        <end position="247"/>
    </location>
</feature>
<feature type="strand" evidence="8">
    <location>
        <begin position="248"/>
        <end position="256"/>
    </location>
</feature>
<feature type="strand" evidence="8">
    <location>
        <begin position="258"/>
        <end position="264"/>
    </location>
</feature>
<feature type="strand" evidence="8">
    <location>
        <begin position="271"/>
        <end position="273"/>
    </location>
</feature>
<feature type="strand" evidence="8">
    <location>
        <begin position="276"/>
        <end position="278"/>
    </location>
</feature>
<feature type="strand" evidence="8">
    <location>
        <begin position="281"/>
        <end position="290"/>
    </location>
</feature>
<feature type="turn" evidence="8">
    <location>
        <begin position="291"/>
        <end position="293"/>
    </location>
</feature>
<feature type="strand" evidence="8">
    <location>
        <begin position="294"/>
        <end position="305"/>
    </location>
</feature>
<feature type="strand" evidence="8">
    <location>
        <begin position="308"/>
        <end position="326"/>
    </location>
</feature>
<feature type="turn" evidence="8">
    <location>
        <begin position="327"/>
        <end position="330"/>
    </location>
</feature>
<feature type="strand" evidence="8">
    <location>
        <begin position="331"/>
        <end position="334"/>
    </location>
</feature>
<feature type="strand" evidence="8">
    <location>
        <begin position="341"/>
        <end position="347"/>
    </location>
</feature>
<feature type="helix" evidence="8">
    <location>
        <begin position="353"/>
        <end position="373"/>
    </location>
</feature>
<feature type="helix" evidence="8">
    <location>
        <begin position="382"/>
        <end position="388"/>
    </location>
</feature>
<feature type="strand" evidence="8">
    <location>
        <begin position="389"/>
        <end position="392"/>
    </location>
</feature>
<feature type="strand" evidence="8">
    <location>
        <begin position="400"/>
        <end position="413"/>
    </location>
</feature>
<organism>
    <name type="scientific">Clostridium botulinum (strain Kyoto / Type A2)</name>
    <dbReference type="NCBI Taxonomy" id="536232"/>
    <lineage>
        <taxon>Bacteria</taxon>
        <taxon>Bacillati</taxon>
        <taxon>Bacillota</taxon>
        <taxon>Clostridia</taxon>
        <taxon>Eubacteriales</taxon>
        <taxon>Clostridiaceae</taxon>
        <taxon>Clostridium</taxon>
    </lineage>
</organism>
<keyword id="KW-0002">3D-structure</keyword>
<keyword id="KW-0843">Virulence</keyword>
<accession>C1FUH7</accession>